<gene>
    <name evidence="1" type="primary">tarI1</name>
    <name type="ordered locus">SAR0252</name>
</gene>
<feature type="chain" id="PRO_0000075620" description="Ribitol-5-phosphate cytidylyltransferase 1">
    <location>
        <begin position="1"/>
        <end position="238"/>
    </location>
</feature>
<feature type="binding site" evidence="1">
    <location>
        <begin position="7"/>
        <end position="10"/>
    </location>
    <ligand>
        <name>CTP</name>
        <dbReference type="ChEBI" id="CHEBI:37563"/>
    </ligand>
</feature>
<feature type="binding site" evidence="1">
    <location>
        <begin position="81"/>
        <end position="87"/>
    </location>
    <ligand>
        <name>CTP</name>
        <dbReference type="ChEBI" id="CHEBI:37563"/>
    </ligand>
</feature>
<feature type="site" description="Transition state stabilizer" evidence="1">
    <location>
        <position position="14"/>
    </location>
</feature>
<feature type="site" description="Transition state stabilizer" evidence="1">
    <location>
        <position position="22"/>
    </location>
</feature>
<feature type="site" description="Positions ribitol 5-phosphate for the nucleophilic attack" evidence="1">
    <location>
        <position position="160"/>
    </location>
</feature>
<feature type="site" description="Positions ribitol 5-phosphate for the nucleophilic attack" evidence="1">
    <location>
        <position position="217"/>
    </location>
</feature>
<accession>Q6GK57</accession>
<organism>
    <name type="scientific">Staphylococcus aureus (strain MRSA252)</name>
    <dbReference type="NCBI Taxonomy" id="282458"/>
    <lineage>
        <taxon>Bacteria</taxon>
        <taxon>Bacillati</taxon>
        <taxon>Bacillota</taxon>
        <taxon>Bacilli</taxon>
        <taxon>Bacillales</taxon>
        <taxon>Staphylococcaceae</taxon>
        <taxon>Staphylococcus</taxon>
    </lineage>
</organism>
<name>TARI1_STAAR</name>
<reference key="1">
    <citation type="journal article" date="2004" name="Proc. Natl. Acad. Sci. U.S.A.">
        <title>Complete genomes of two clinical Staphylococcus aureus strains: evidence for the rapid evolution of virulence and drug resistance.</title>
        <authorList>
            <person name="Holden M.T.G."/>
            <person name="Feil E.J."/>
            <person name="Lindsay J.A."/>
            <person name="Peacock S.J."/>
            <person name="Day N.P.J."/>
            <person name="Enright M.C."/>
            <person name="Foster T.J."/>
            <person name="Moore C.E."/>
            <person name="Hurst L."/>
            <person name="Atkin R."/>
            <person name="Barron A."/>
            <person name="Bason N."/>
            <person name="Bentley S.D."/>
            <person name="Chillingworth C."/>
            <person name="Chillingworth T."/>
            <person name="Churcher C."/>
            <person name="Clark L."/>
            <person name="Corton C."/>
            <person name="Cronin A."/>
            <person name="Doggett J."/>
            <person name="Dowd L."/>
            <person name="Feltwell T."/>
            <person name="Hance Z."/>
            <person name="Harris B."/>
            <person name="Hauser H."/>
            <person name="Holroyd S."/>
            <person name="Jagels K."/>
            <person name="James K.D."/>
            <person name="Lennard N."/>
            <person name="Line A."/>
            <person name="Mayes R."/>
            <person name="Moule S."/>
            <person name="Mungall K."/>
            <person name="Ormond D."/>
            <person name="Quail M.A."/>
            <person name="Rabbinowitsch E."/>
            <person name="Rutherford K.M."/>
            <person name="Sanders M."/>
            <person name="Sharp S."/>
            <person name="Simmonds M."/>
            <person name="Stevens K."/>
            <person name="Whitehead S."/>
            <person name="Barrell B.G."/>
            <person name="Spratt B.G."/>
            <person name="Parkhill J."/>
        </authorList>
    </citation>
    <scope>NUCLEOTIDE SEQUENCE [LARGE SCALE GENOMIC DNA]</scope>
    <source>
        <strain>MRSA252</strain>
    </source>
</reference>
<comment type="function">
    <text evidence="1">Catalyzes the transfer of the cytidylyl group of CTP to D-ribitol 5-phosphate.</text>
</comment>
<comment type="catalytic activity">
    <reaction evidence="1">
        <text>D-ribitol 5-phosphate + CTP + H(+) = CDP-L-ribitol + diphosphate</text>
        <dbReference type="Rhea" id="RHEA:12456"/>
        <dbReference type="ChEBI" id="CHEBI:15378"/>
        <dbReference type="ChEBI" id="CHEBI:33019"/>
        <dbReference type="ChEBI" id="CHEBI:37563"/>
        <dbReference type="ChEBI" id="CHEBI:57608"/>
        <dbReference type="ChEBI" id="CHEBI:57695"/>
        <dbReference type="EC" id="2.7.7.40"/>
    </reaction>
</comment>
<comment type="pathway">
    <text evidence="1">Cell wall biogenesis; poly(ribitol phosphate) teichoic acid biosynthesis.</text>
</comment>
<comment type="similarity">
    <text evidence="1">Belongs to the IspD/TarI cytidylyltransferase family. TarI subfamily.</text>
</comment>
<keyword id="KW-0961">Cell wall biogenesis/degradation</keyword>
<keyword id="KW-0548">Nucleotidyltransferase</keyword>
<keyword id="KW-0777">Teichoic acid biosynthesis</keyword>
<keyword id="KW-0808">Transferase</keyword>
<evidence type="ECO:0000255" key="1">
    <source>
        <dbReference type="HAMAP-Rule" id="MF_02068"/>
    </source>
</evidence>
<dbReference type="EC" id="2.7.7.40" evidence="1"/>
<dbReference type="EMBL" id="BX571856">
    <property type="protein sequence ID" value="CAG39278.1"/>
    <property type="molecule type" value="Genomic_DNA"/>
</dbReference>
<dbReference type="RefSeq" id="WP_000872486.1">
    <property type="nucleotide sequence ID" value="NC_002952.2"/>
</dbReference>
<dbReference type="SMR" id="Q6GK57"/>
<dbReference type="KEGG" id="sar:SAR0252"/>
<dbReference type="HOGENOM" id="CLU_061281_2_3_9"/>
<dbReference type="UniPathway" id="UPA00790"/>
<dbReference type="Proteomes" id="UP000000596">
    <property type="component" value="Chromosome"/>
</dbReference>
<dbReference type="GO" id="GO:0050518">
    <property type="term" value="F:2-C-methyl-D-erythritol 4-phosphate cytidylyltransferase activity"/>
    <property type="evidence" value="ECO:0007669"/>
    <property type="project" value="TreeGrafter"/>
</dbReference>
<dbReference type="GO" id="GO:0047349">
    <property type="term" value="F:D-ribitol-5-phosphate cytidylyltransferase activity"/>
    <property type="evidence" value="ECO:0007669"/>
    <property type="project" value="UniProtKB-UniRule"/>
</dbReference>
<dbReference type="GO" id="GO:0071555">
    <property type="term" value="P:cell wall organization"/>
    <property type="evidence" value="ECO:0007669"/>
    <property type="project" value="UniProtKB-KW"/>
</dbReference>
<dbReference type="GO" id="GO:0008299">
    <property type="term" value="P:isoprenoid biosynthetic process"/>
    <property type="evidence" value="ECO:0007669"/>
    <property type="project" value="InterPro"/>
</dbReference>
<dbReference type="GO" id="GO:1902012">
    <property type="term" value="P:poly(ribitol phosphate) teichoic acid biosynthetic process"/>
    <property type="evidence" value="ECO:0007669"/>
    <property type="project" value="UniProtKB-UniRule"/>
</dbReference>
<dbReference type="CDD" id="cd02516">
    <property type="entry name" value="CDP-ME_synthetase"/>
    <property type="match status" value="1"/>
</dbReference>
<dbReference type="FunFam" id="3.90.550.10:FF:000003">
    <property type="entry name" value="2-C-methyl-D-erythritol 4-phosphate cytidylyltransferase"/>
    <property type="match status" value="1"/>
</dbReference>
<dbReference type="Gene3D" id="3.90.550.10">
    <property type="entry name" value="Spore Coat Polysaccharide Biosynthesis Protein SpsA, Chain A"/>
    <property type="match status" value="1"/>
</dbReference>
<dbReference type="HAMAP" id="MF_02068">
    <property type="entry name" value="TarI"/>
    <property type="match status" value="1"/>
</dbReference>
<dbReference type="InterPro" id="IPR034683">
    <property type="entry name" value="IspD/TarI"/>
</dbReference>
<dbReference type="InterPro" id="IPR050088">
    <property type="entry name" value="IspD/TarI_cytidylyltransf_bact"/>
</dbReference>
<dbReference type="InterPro" id="IPR018294">
    <property type="entry name" value="ISPD_synthase_CS"/>
</dbReference>
<dbReference type="InterPro" id="IPR029044">
    <property type="entry name" value="Nucleotide-diphossugar_trans"/>
</dbReference>
<dbReference type="InterPro" id="IPR034709">
    <property type="entry name" value="TarI"/>
</dbReference>
<dbReference type="NCBIfam" id="NF001183">
    <property type="entry name" value="PRK00155.1-3"/>
    <property type="match status" value="1"/>
</dbReference>
<dbReference type="NCBIfam" id="NF009924">
    <property type="entry name" value="PRK13385.1"/>
    <property type="match status" value="1"/>
</dbReference>
<dbReference type="PANTHER" id="PTHR32125">
    <property type="entry name" value="2-C-METHYL-D-ERYTHRITOL 4-PHOSPHATE CYTIDYLYLTRANSFERASE, CHLOROPLASTIC"/>
    <property type="match status" value="1"/>
</dbReference>
<dbReference type="PANTHER" id="PTHR32125:SF8">
    <property type="entry name" value="RIBITOL-5-PHOSPHATE CYTIDYLYLTRANSFERASE"/>
    <property type="match status" value="1"/>
</dbReference>
<dbReference type="Pfam" id="PF01128">
    <property type="entry name" value="IspD"/>
    <property type="match status" value="1"/>
</dbReference>
<dbReference type="SUPFAM" id="SSF53448">
    <property type="entry name" value="Nucleotide-diphospho-sugar transferases"/>
    <property type="match status" value="1"/>
</dbReference>
<dbReference type="PROSITE" id="PS01295">
    <property type="entry name" value="ISPD"/>
    <property type="match status" value="1"/>
</dbReference>
<sequence>MKYAGILAGGIGSRMGNVPLPKQFLDLDNKPILIHTLEKFILINDFEKIIIATPQQWMTHTKDTLRKFKISDERIEVIQGGSDRNDTIMNIVKHIESTNGINDDDVIVTHDAVRPFLTHRIIKENIQAALEYGAVDTVIDAIDTIVTSKDNQTIDAIPVRNEMYQGQTPQSFNINLLKESYAQLSDEQKSILSDACKIIVETNKPVRLVKGELYNIKVTTPYDLKVANAIIRGGIADD</sequence>
<proteinExistence type="inferred from homology"/>
<protein>
    <recommendedName>
        <fullName evidence="1">Ribitol-5-phosphate cytidylyltransferase 1</fullName>
        <ecNumber evidence="1">2.7.7.40</ecNumber>
    </recommendedName>
</protein>